<evidence type="ECO:0000250" key="1"/>
<evidence type="ECO:0000250" key="2">
    <source>
        <dbReference type="UniProtKB" id="P23565"/>
    </source>
</evidence>
<evidence type="ECO:0000250" key="3">
    <source>
        <dbReference type="UniProtKB" id="Q16352"/>
    </source>
</evidence>
<evidence type="ECO:0000255" key="4">
    <source>
        <dbReference type="PROSITE-ProRule" id="PRU01188"/>
    </source>
</evidence>
<evidence type="ECO:0000256" key="5">
    <source>
        <dbReference type="SAM" id="MobiDB-lite"/>
    </source>
</evidence>
<evidence type="ECO:0000269" key="6">
    <source>
    </source>
</evidence>
<evidence type="ECO:0000269" key="7">
    <source>
    </source>
</evidence>
<evidence type="ECO:0000305" key="8"/>
<evidence type="ECO:0007744" key="9">
    <source>
    </source>
</evidence>
<evidence type="ECO:0007744" key="10">
    <source>
    </source>
</evidence>
<accession>P46660</accession>
<accession>Q61958</accession>
<accession>Q8VCW5</accession>
<keyword id="KW-0007">Acetylation</keyword>
<keyword id="KW-0175">Coiled coil</keyword>
<keyword id="KW-0217">Developmental protein</keyword>
<keyword id="KW-0221">Differentiation</keyword>
<keyword id="KW-0903">Direct protein sequencing</keyword>
<keyword id="KW-0325">Glycoprotein</keyword>
<keyword id="KW-0403">Intermediate filament</keyword>
<keyword id="KW-0524">Neurogenesis</keyword>
<keyword id="KW-0597">Phosphoprotein</keyword>
<keyword id="KW-1185">Reference proteome</keyword>
<sequence>MSFGSEHYLCSASSYRKVFGDSSRLSARLSGPGGSGSFRSQSLSRSNVASTAACSSASSLGLGLAYRRLPASDGLDLSQAAARTNEYKIIRTNEKEQLQGLNDRFAVFIEKVHQLETQNRALEAELAALRQRHAEPSRVGELFQRELRELRAQLEEASSARAQALLERDGLAEEVQRLRARCEEESRGREGAERALKAQQRDVDGATLARLDLEKKVESLLDELAFVRQVHDEEVAELLATLQASSQAAAEVDVAVAKPDLTSALREIRAQYESLAAKNLQSAEEWYKSKFANLNEQAARSTEAIRASREEIHEYRRQLQARTIEIEGLRGANESLERQILELEERHSAEVAGYQDSIGQLESDLRNTKSEMARHLREYQDLLNVKMALDIEIAAYRKLLEGEETRFSTGGLSISGLNPLPNPSYLLPPRILSSTASKVSSAGLSLKKEEEEEEEEASKEVSKKTSKVGEGFEETLGEAVISTKKTGKSATEESTSSSQKM</sequence>
<feature type="chain" id="PRO_0000063784" description="Alpha-internexin">
    <location>
        <begin position="1"/>
        <end position="501"/>
    </location>
</feature>
<feature type="domain" description="IF rod" evidence="4">
    <location>
        <begin position="94"/>
        <end position="407"/>
    </location>
</feature>
<feature type="region of interest" description="Head">
    <location>
        <begin position="1"/>
        <end position="87"/>
    </location>
</feature>
<feature type="region of interest" description="Coil 1A">
    <location>
        <begin position="88"/>
        <end position="129"/>
    </location>
</feature>
<feature type="region of interest" description="Linker 1">
    <location>
        <begin position="130"/>
        <end position="142"/>
    </location>
</feature>
<feature type="region of interest" description="Coil 1B">
    <location>
        <begin position="143"/>
        <end position="238"/>
    </location>
</feature>
<feature type="region of interest" description="Linker 2">
    <location>
        <begin position="239"/>
        <end position="262"/>
    </location>
</feature>
<feature type="region of interest" description="Coil 2">
    <location>
        <begin position="263"/>
        <end position="408"/>
    </location>
</feature>
<feature type="region of interest" description="Tail">
    <location>
        <begin position="409"/>
        <end position="501"/>
    </location>
</feature>
<feature type="region of interest" description="Disordered" evidence="5">
    <location>
        <begin position="441"/>
        <end position="501"/>
    </location>
</feature>
<feature type="compositionally biased region" description="Polar residues" evidence="5">
    <location>
        <begin position="488"/>
        <end position="501"/>
    </location>
</feature>
<feature type="modified residue" description="Phosphoserine" evidence="9">
    <location>
        <position position="72"/>
    </location>
</feature>
<feature type="modified residue" description="Phosphoserine" evidence="10">
    <location>
        <position position="219"/>
    </location>
</feature>
<feature type="modified residue" description="N6-acetyllysine" evidence="3">
    <location>
        <position position="290"/>
    </location>
</feature>
<feature type="modified residue" description="Phosphoserine" evidence="9">
    <location>
        <position position="335"/>
    </location>
</feature>
<feature type="modified residue" description="Phosphoserine" evidence="3">
    <location>
        <position position="498"/>
    </location>
</feature>
<feature type="sequence conflict" description="In Ref. 2; AAB37740." evidence="8" ref="2">
    <original>R</original>
    <variation>P</variation>
    <location>
        <position position="28"/>
    </location>
</feature>
<feature type="sequence conflict" description="In Ref. 2; AAB37740." evidence="8" ref="2">
    <original>G</original>
    <variation>A</variation>
    <location>
        <position position="34"/>
    </location>
</feature>
<feature type="sequence conflict" description="In Ref. 2; AAB37740." evidence="8" ref="2">
    <original>E</original>
    <variation>Q</variation>
    <location>
        <position position="141"/>
    </location>
</feature>
<feature type="sequence conflict" description="In Ref. 2; AAB37740." evidence="8" ref="2">
    <original>L</original>
    <variation>R</variation>
    <location>
        <position position="147"/>
    </location>
</feature>
<feature type="sequence conflict" description="In Ref. 1; AAA62617." evidence="8" ref="1">
    <original>Q</original>
    <variation>E</variation>
    <location>
        <position position="163"/>
    </location>
</feature>
<feature type="sequence conflict" description="In Ref. 2; AAB37740." evidence="8" ref="2">
    <original>Q</original>
    <variation>L</variation>
    <location>
        <position position="297"/>
    </location>
</feature>
<feature type="sequence conflict" description="In Ref. 2; AAB37740." evidence="8" ref="2">
    <original>S</original>
    <variation>T</variation>
    <location>
        <position position="301"/>
    </location>
</feature>
<feature type="sequence conflict" description="In Ref. 2; AAB37740." evidence="8" ref="2">
    <original>QL</original>
    <variation>HV</variation>
    <location>
        <begin position="318"/>
        <end position="319"/>
    </location>
</feature>
<feature type="sequence conflict" description="In Ref. 1; AAA62617." evidence="8" ref="1">
    <original>H</original>
    <variation>D</variation>
    <location>
        <position position="347"/>
    </location>
</feature>
<feature type="sequence conflict" description="In Ref. 1; AAA62617." evidence="8" ref="1">
    <original>L</original>
    <variation>F</variation>
    <location>
        <position position="383"/>
    </location>
</feature>
<feature type="sequence conflict" description="In Ref. 1; AAA62617." evidence="8" ref="1">
    <original>A</original>
    <variation>G</variation>
    <location>
        <position position="388"/>
    </location>
</feature>
<feature type="sequence conflict" description="In Ref. 2; AAB37740." evidence="8" ref="2">
    <original>E</original>
    <variation>N</variation>
    <location>
        <position position="403"/>
    </location>
</feature>
<feature type="sequence conflict" description="In Ref. 1; AAA62617 and 2; AAB37740." evidence="8" ref="1 2">
    <original>A</original>
    <variation>T</variation>
    <location>
        <position position="442"/>
    </location>
</feature>
<feature type="sequence conflict" description="In Ref. 1; AAA62617." evidence="8" ref="1">
    <original>G</original>
    <variation>R</variation>
    <location>
        <position position="443"/>
    </location>
</feature>
<feature type="sequence conflict" description="In Ref. 1; AAA62617 and 2; AAB37740." evidence="8" ref="1 2">
    <original>E</original>
    <variation>D</variation>
    <location>
        <position position="450"/>
    </location>
</feature>
<feature type="sequence conflict" description="In Ref. 1; AAA62617." evidence="8" ref="1">
    <original>E</original>
    <variation>EEEE</variation>
    <location>
        <position position="455"/>
    </location>
</feature>
<feature type="sequence conflict" description="In Ref. 1; AAA62617 and 2; AAB37740." evidence="8" ref="1 2">
    <original>E</original>
    <variation>D</variation>
    <location>
        <position position="456"/>
    </location>
</feature>
<feature type="sequence conflict" description="In Ref. 2; AAB37740." evidence="8" ref="2">
    <original>S</original>
    <variation>L</variation>
    <location>
        <position position="489"/>
    </location>
</feature>
<protein>
    <recommendedName>
        <fullName>Alpha-internexin</fullName>
        <shortName>Alpha-Inx</shortName>
    </recommendedName>
    <alternativeName>
        <fullName>66 kDa neurofilament protein</fullName>
        <shortName>NF-66</shortName>
        <shortName>Neurofilament-66</shortName>
    </alternativeName>
</protein>
<name>AINX_MOUSE</name>
<gene>
    <name type="primary">Ina</name>
</gene>
<dbReference type="EMBL" id="L27220">
    <property type="protein sequence ID" value="AAA62617.1"/>
    <property type="molecule type" value="Genomic_DNA"/>
</dbReference>
<dbReference type="EMBL" id="L36390">
    <property type="protein sequence ID" value="AAB37740.1"/>
    <property type="molecule type" value="mRNA"/>
</dbReference>
<dbReference type="EMBL" id="BC018383">
    <property type="protein sequence ID" value="AAH18383.1"/>
    <property type="molecule type" value="mRNA"/>
</dbReference>
<dbReference type="CCDS" id="CCDS38013.1"/>
<dbReference type="PIR" id="I53868">
    <property type="entry name" value="I53868"/>
</dbReference>
<dbReference type="RefSeq" id="NP_666212.3">
    <property type="nucleotide sequence ID" value="NM_146100.4"/>
</dbReference>
<dbReference type="SMR" id="P46660"/>
<dbReference type="BioGRID" id="230487">
    <property type="interactions" value="43"/>
</dbReference>
<dbReference type="CORUM" id="P46660"/>
<dbReference type="FunCoup" id="P46660">
    <property type="interactions" value="435"/>
</dbReference>
<dbReference type="IntAct" id="P46660">
    <property type="interactions" value="20"/>
</dbReference>
<dbReference type="MINT" id="P46660"/>
<dbReference type="STRING" id="10090.ENSMUSP00000041347"/>
<dbReference type="GlyGen" id="P46660">
    <property type="glycosylation" value="6 sites, 1 N-linked glycan (1 site), 1 O-linked glycan (5 sites)"/>
</dbReference>
<dbReference type="iPTMnet" id="P46660"/>
<dbReference type="PhosphoSitePlus" id="P46660"/>
<dbReference type="SwissPalm" id="P46660"/>
<dbReference type="jPOST" id="P46660"/>
<dbReference type="PaxDb" id="10090-ENSMUSP00000041347"/>
<dbReference type="PeptideAtlas" id="P46660"/>
<dbReference type="ProteomicsDB" id="296007"/>
<dbReference type="Pumba" id="P46660"/>
<dbReference type="Antibodypedia" id="1538">
    <property type="antibodies" value="493 antibodies from 40 providers"/>
</dbReference>
<dbReference type="DNASU" id="226180"/>
<dbReference type="Ensembl" id="ENSMUST00000037636.4">
    <property type="protein sequence ID" value="ENSMUSP00000041347.4"/>
    <property type="gene ID" value="ENSMUSG00000034336.4"/>
</dbReference>
<dbReference type="GeneID" id="226180"/>
<dbReference type="KEGG" id="mmu:226180"/>
<dbReference type="UCSC" id="uc008huk.1">
    <property type="organism name" value="mouse"/>
</dbReference>
<dbReference type="AGR" id="MGI:96568"/>
<dbReference type="CTD" id="9118"/>
<dbReference type="MGI" id="MGI:96568">
    <property type="gene designation" value="Ina"/>
</dbReference>
<dbReference type="VEuPathDB" id="HostDB:ENSMUSG00000034336"/>
<dbReference type="eggNOG" id="ENOG502RAU0">
    <property type="taxonomic scope" value="Eukaryota"/>
</dbReference>
<dbReference type="GeneTree" id="ENSGT00940000154418"/>
<dbReference type="HOGENOM" id="CLU_012560_7_3_1"/>
<dbReference type="InParanoid" id="P46660"/>
<dbReference type="OMA" id="CASSYRK"/>
<dbReference type="OrthoDB" id="2441647at2759"/>
<dbReference type="PhylomeDB" id="P46660"/>
<dbReference type="TreeFam" id="TF330122"/>
<dbReference type="BioGRID-ORCS" id="226180">
    <property type="hits" value="6 hits in 79 CRISPR screens"/>
</dbReference>
<dbReference type="CD-CODE" id="CE726F99">
    <property type="entry name" value="Postsynaptic density"/>
</dbReference>
<dbReference type="ChiTaRS" id="Ina">
    <property type="organism name" value="mouse"/>
</dbReference>
<dbReference type="PRO" id="PR:P46660"/>
<dbReference type="Proteomes" id="UP000000589">
    <property type="component" value="Chromosome 19"/>
</dbReference>
<dbReference type="RNAct" id="P46660">
    <property type="molecule type" value="protein"/>
</dbReference>
<dbReference type="Bgee" id="ENSMUSG00000034336">
    <property type="expression patterns" value="Expressed in cortical plate and 168 other cell types or tissues"/>
</dbReference>
<dbReference type="GO" id="GO:0036464">
    <property type="term" value="C:cytoplasmic ribonucleoprotein granule"/>
    <property type="evidence" value="ECO:0007669"/>
    <property type="project" value="Ensembl"/>
</dbReference>
<dbReference type="GO" id="GO:0043209">
    <property type="term" value="C:myelin sheath"/>
    <property type="evidence" value="ECO:0007005"/>
    <property type="project" value="UniProtKB"/>
</dbReference>
<dbReference type="GO" id="GO:0005883">
    <property type="term" value="C:neurofilament"/>
    <property type="evidence" value="ECO:0000314"/>
    <property type="project" value="MGI"/>
</dbReference>
<dbReference type="GO" id="GO:0098794">
    <property type="term" value="C:postsynapse"/>
    <property type="evidence" value="ECO:0000314"/>
    <property type="project" value="SynGO"/>
</dbReference>
<dbReference type="GO" id="GO:0098685">
    <property type="term" value="C:Schaffer collateral - CA1 synapse"/>
    <property type="evidence" value="ECO:0000314"/>
    <property type="project" value="SynGO"/>
</dbReference>
<dbReference type="GO" id="GO:0099184">
    <property type="term" value="F:structural constituent of postsynaptic intermediate filament cytoskeleton"/>
    <property type="evidence" value="ECO:0000314"/>
    <property type="project" value="SynGO"/>
</dbReference>
<dbReference type="GO" id="GO:0030154">
    <property type="term" value="P:cell differentiation"/>
    <property type="evidence" value="ECO:0007669"/>
    <property type="project" value="UniProtKB-KW"/>
</dbReference>
<dbReference type="GO" id="GO:1990830">
    <property type="term" value="P:cellular response to leukemia inhibitory factor"/>
    <property type="evidence" value="ECO:0000270"/>
    <property type="project" value="MGI"/>
</dbReference>
<dbReference type="GO" id="GO:0045104">
    <property type="term" value="P:intermediate filament cytoskeleton organization"/>
    <property type="evidence" value="ECO:0000315"/>
    <property type="project" value="MGI"/>
</dbReference>
<dbReference type="GO" id="GO:0007399">
    <property type="term" value="P:nervous system development"/>
    <property type="evidence" value="ECO:0007669"/>
    <property type="project" value="UniProtKB-KW"/>
</dbReference>
<dbReference type="GO" id="GO:0060052">
    <property type="term" value="P:neurofilament cytoskeleton organization"/>
    <property type="evidence" value="ECO:0000316"/>
    <property type="project" value="MGI"/>
</dbReference>
<dbReference type="GO" id="GO:0099170">
    <property type="term" value="P:postsynaptic modulation of chemical synaptic transmission"/>
    <property type="evidence" value="ECO:0000314"/>
    <property type="project" value="SynGO"/>
</dbReference>
<dbReference type="FunFam" id="1.20.5.1160:FF:000001">
    <property type="entry name" value="Keratin type II"/>
    <property type="match status" value="1"/>
</dbReference>
<dbReference type="FunFam" id="1.20.5.170:FF:000002">
    <property type="entry name" value="Type I keratin KA11"/>
    <property type="match status" value="1"/>
</dbReference>
<dbReference type="FunFam" id="1.20.5.500:FF:000001">
    <property type="entry name" value="Type II keratin 23"/>
    <property type="match status" value="1"/>
</dbReference>
<dbReference type="Gene3D" id="1.20.5.170">
    <property type="match status" value="1"/>
</dbReference>
<dbReference type="Gene3D" id="1.20.5.500">
    <property type="entry name" value="Single helix bin"/>
    <property type="match status" value="1"/>
</dbReference>
<dbReference type="Gene3D" id="1.20.5.1160">
    <property type="entry name" value="Vasodilator-stimulated phosphoprotein"/>
    <property type="match status" value="1"/>
</dbReference>
<dbReference type="InterPro" id="IPR018039">
    <property type="entry name" value="IF_conserved"/>
</dbReference>
<dbReference type="InterPro" id="IPR039008">
    <property type="entry name" value="IF_rod_dom"/>
</dbReference>
<dbReference type="InterPro" id="IPR006821">
    <property type="entry name" value="Intermed_filament_DNA-bd"/>
</dbReference>
<dbReference type="InterPro" id="IPR050405">
    <property type="entry name" value="Intermediate_filament"/>
</dbReference>
<dbReference type="PANTHER" id="PTHR45652:SF18">
    <property type="entry name" value="ALPHA-INTERNEXIN"/>
    <property type="match status" value="1"/>
</dbReference>
<dbReference type="PANTHER" id="PTHR45652">
    <property type="entry name" value="GLIAL FIBRILLARY ACIDIC PROTEIN"/>
    <property type="match status" value="1"/>
</dbReference>
<dbReference type="Pfam" id="PF00038">
    <property type="entry name" value="Filament"/>
    <property type="match status" value="1"/>
</dbReference>
<dbReference type="Pfam" id="PF04732">
    <property type="entry name" value="Filament_head"/>
    <property type="match status" value="1"/>
</dbReference>
<dbReference type="SMART" id="SM01391">
    <property type="entry name" value="Filament"/>
    <property type="match status" value="1"/>
</dbReference>
<dbReference type="SUPFAM" id="SSF64593">
    <property type="entry name" value="Intermediate filament protein, coiled coil region"/>
    <property type="match status" value="2"/>
</dbReference>
<dbReference type="PROSITE" id="PS00226">
    <property type="entry name" value="IF_ROD_1"/>
    <property type="match status" value="1"/>
</dbReference>
<dbReference type="PROSITE" id="PS51842">
    <property type="entry name" value="IF_ROD_2"/>
    <property type="match status" value="1"/>
</dbReference>
<proteinExistence type="evidence at protein level"/>
<organism>
    <name type="scientific">Mus musculus</name>
    <name type="common">Mouse</name>
    <dbReference type="NCBI Taxonomy" id="10090"/>
    <lineage>
        <taxon>Eukaryota</taxon>
        <taxon>Metazoa</taxon>
        <taxon>Chordata</taxon>
        <taxon>Craniata</taxon>
        <taxon>Vertebrata</taxon>
        <taxon>Euteleostomi</taxon>
        <taxon>Mammalia</taxon>
        <taxon>Eutheria</taxon>
        <taxon>Euarchontoglires</taxon>
        <taxon>Glires</taxon>
        <taxon>Rodentia</taxon>
        <taxon>Myomorpha</taxon>
        <taxon>Muroidea</taxon>
        <taxon>Muridae</taxon>
        <taxon>Murinae</taxon>
        <taxon>Mus</taxon>
        <taxon>Mus</taxon>
    </lineage>
</organism>
<comment type="function">
    <text evidence="1 7">Class-IV neuronal intermediate filament that is able to self-assemble. It is involved in the morphogenesis of neurons. It may form an independent structural network without the involvement of other neurofilaments or it may cooperate with NEFL to form the filamentous backbone to which NEFM and NEFH attach to form the cross-bridges (By similarity). May also cooperate with the neuronal intermediate filament protein PRPH to form filamentous networks (PubMed:22723690).</text>
</comment>
<comment type="subunit">
    <text evidence="2">Forms homodimers (in vitro) (By similarity). Forms heterodimers with NEFL, NEFM or NEFH (in vitro) (By similarity).</text>
</comment>
<comment type="PTM">
    <text evidence="6">O-glycosylated.</text>
</comment>
<comment type="similarity">
    <text evidence="4">Belongs to the intermediate filament family.</text>
</comment>
<reference key="1">
    <citation type="journal article" date="1994" name="Gene">
        <title>Characterization of the mouse gene encoding the neuronal intermediate filament protein alpha-internexin.</title>
        <authorList>
            <person name="Chien C.-L."/>
            <person name="Liem R.K.H."/>
        </authorList>
    </citation>
    <scope>NUCLEOTIDE SEQUENCE [GENOMIC DNA]</scope>
    <source>
        <strain>C57BL/6 X CBA</strain>
        <tissue>Spleen</tissue>
    </source>
</reference>
<reference key="2">
    <citation type="journal article" date="1996" name="Neurochem. Res.">
        <title>The 66-kDa neurofilament protein (NF-66): sequence analysis and evolution.</title>
        <authorList>
            <person name="Chan S.O."/>
            <person name="Chiu F.C."/>
        </authorList>
    </citation>
    <scope>NUCLEOTIDE SEQUENCE [MRNA]</scope>
    <source>
        <tissue>Brain</tissue>
    </source>
</reference>
<reference key="3">
    <citation type="journal article" date="2004" name="Genome Res.">
        <title>The status, quality, and expansion of the NIH full-length cDNA project: the Mammalian Gene Collection (MGC).</title>
        <authorList>
            <consortium name="The MGC Project Team"/>
        </authorList>
    </citation>
    <scope>NUCLEOTIDE SEQUENCE [LARGE SCALE MRNA]</scope>
    <source>
        <tissue>Eye</tissue>
    </source>
</reference>
<reference key="4">
    <citation type="submission" date="2009-01" db="UniProtKB">
        <authorList>
            <person name="Lubec G."/>
            <person name="Klug S."/>
            <person name="Sunyer B."/>
            <person name="Chen W.-Q."/>
        </authorList>
    </citation>
    <scope>PROTEIN SEQUENCE OF 17-24; 29-39; 46-83; 92-130; 139-145; 152-177; 202-210; 216-228; 270-288; 291-300; 310-316; 323-366; 378-430; 431-438 AND 471-487</scope>
    <scope>IDENTIFICATION BY MASS SPECTROMETRY</scope>
    <source>
        <strain>OF1</strain>
        <tissue>Hippocampus</tissue>
    </source>
</reference>
<reference key="5">
    <citation type="journal article" date="2006" name="Mol. Cell. Proteomics">
        <title>Comprehensive identification of phosphorylation sites in postsynaptic density preparations.</title>
        <authorList>
            <person name="Trinidad J.C."/>
            <person name="Specht C.G."/>
            <person name="Thalhammer A."/>
            <person name="Schoepfer R."/>
            <person name="Burlingame A.L."/>
        </authorList>
    </citation>
    <scope>PHOSPHORYLATION [LARGE SCALE ANALYSIS] AT SER-72 AND SER-335</scope>
    <scope>IDENTIFICATION BY MASS SPECTROMETRY [LARGE SCALE ANALYSIS]</scope>
    <source>
        <tissue>Brain</tissue>
    </source>
</reference>
<reference key="6">
    <citation type="journal article" date="2006" name="Mol. Cell. Proteomics">
        <title>O-linked N-acetylglucosamine proteomics of postsynaptic density preparations using lectin weak affinity chromatography and mass spectrometry.</title>
        <authorList>
            <person name="Vosseller K."/>
            <person name="Trinidad J.C."/>
            <person name="Chalkley R.J."/>
            <person name="Specht C.G."/>
            <person name="Thalhammer A."/>
            <person name="Lynn A.J."/>
            <person name="Snedecor J.O."/>
            <person name="Guan S."/>
            <person name="Medzihradszky K.F."/>
            <person name="Maltby D.A."/>
            <person name="Schoepfer R."/>
            <person name="Burlingame A.L."/>
        </authorList>
    </citation>
    <scope>GLYCOSYLATION [LARGE SCALE ANALYSIS]</scope>
    <source>
        <tissue>Brain</tissue>
    </source>
</reference>
<reference key="7">
    <citation type="journal article" date="2010" name="Cell">
        <title>A tissue-specific atlas of mouse protein phosphorylation and expression.</title>
        <authorList>
            <person name="Huttlin E.L."/>
            <person name="Jedrychowski M.P."/>
            <person name="Elias J.E."/>
            <person name="Goswami T."/>
            <person name="Rad R."/>
            <person name="Beausoleil S.A."/>
            <person name="Villen J."/>
            <person name="Haas W."/>
            <person name="Sowa M.E."/>
            <person name="Gygi S.P."/>
        </authorList>
    </citation>
    <scope>PHOSPHORYLATION [LARGE SCALE ANALYSIS] AT SER-219</scope>
    <scope>IDENTIFICATION BY MASS SPECTROMETRY [LARGE SCALE ANALYSIS]</scope>
    <source>
        <tissue>Brain</tissue>
    </source>
</reference>
<reference key="8">
    <citation type="journal article" date="2012" name="J. Neurosci.">
        <title>Peripherin is a subunit of peripheral nerve neurofilaments: implications for differential vulnerability of CNS and peripheral nervous system axons.</title>
        <authorList>
            <person name="Yuan A."/>
            <person name="Sasaki T."/>
            <person name="Kumar A."/>
            <person name="Peterhoff C.M."/>
            <person name="Rao M.V."/>
            <person name="Liem R.K."/>
            <person name="Julien J.P."/>
            <person name="Nixon R.A."/>
        </authorList>
    </citation>
    <scope>FUNCTION</scope>
</reference>